<proteinExistence type="evidence at protein level"/>
<sequence length="75" mass="8208">MSVQDKQGQNINVGDTVYTPYRGGKHEGQVADIVTTKEEAAEKGVKNPPKVLFTDQNNKDVAHNPGTLTDLDKQK</sequence>
<gene>
    <name evidence="3" type="primary">HVA1</name>
    <name evidence="5" type="ORF">CNAG_02591</name>
</gene>
<dbReference type="EMBL" id="CP003822">
    <property type="protein sequence ID" value="AFR94101.1"/>
    <property type="molecule type" value="Genomic_DNA"/>
</dbReference>
<dbReference type="RefSeq" id="XP_012048039.1">
    <property type="nucleotide sequence ID" value="XM_012192649.1"/>
</dbReference>
<dbReference type="PDB" id="4P5N">
    <property type="method" value="X-ray"/>
    <property type="resolution" value="1.49 A"/>
    <property type="chains" value="A/B=1-75"/>
</dbReference>
<dbReference type="PDBsum" id="4P5N"/>
<dbReference type="SMR" id="J9VKY2"/>
<dbReference type="GeneID" id="23886202"/>
<dbReference type="KEGG" id="cng:CNAG_02591"/>
<dbReference type="VEuPathDB" id="FungiDB:CNAG_02591"/>
<dbReference type="HOGENOM" id="CLU_177181_0_1_1"/>
<dbReference type="OrthoDB" id="1489at5206"/>
<dbReference type="EvolutionaryTrace" id="J9VKY2"/>
<dbReference type="PHI-base" id="PHI:6605"/>
<dbReference type="Proteomes" id="UP000010091">
    <property type="component" value="Chromosome 3"/>
</dbReference>
<dbReference type="Gene3D" id="2.30.30.1060">
    <property type="match status" value="1"/>
</dbReference>
<dbReference type="InterPro" id="IPR021331">
    <property type="entry name" value="Hva1_TUDOR"/>
</dbReference>
<dbReference type="Pfam" id="PF11160">
    <property type="entry name" value="Hva1_TUDOR"/>
    <property type="match status" value="1"/>
</dbReference>
<name>PRL65_CRYNH</name>
<feature type="chain" id="PRO_0000461183" description="Putative primary metabolism protein HVA1">
    <location>
        <begin position="1"/>
        <end position="75"/>
    </location>
</feature>
<feature type="region of interest" description="Disordered" evidence="1">
    <location>
        <begin position="1"/>
        <end position="24"/>
    </location>
</feature>
<feature type="region of interest" description="Disordered" evidence="1">
    <location>
        <begin position="40"/>
        <end position="75"/>
    </location>
</feature>
<feature type="compositionally biased region" description="Polar residues" evidence="1">
    <location>
        <begin position="1"/>
        <end position="13"/>
    </location>
</feature>
<feature type="strand" evidence="8">
    <location>
        <begin position="16"/>
        <end position="21"/>
    </location>
</feature>
<feature type="strand" evidence="8">
    <location>
        <begin position="24"/>
        <end position="34"/>
    </location>
</feature>
<feature type="helix" evidence="8">
    <location>
        <begin position="37"/>
        <end position="42"/>
    </location>
</feature>
<feature type="strand" evidence="8">
    <location>
        <begin position="50"/>
        <end position="54"/>
    </location>
</feature>
<feature type="strand" evidence="8">
    <location>
        <begin position="60"/>
        <end position="63"/>
    </location>
</feature>
<feature type="helix" evidence="8">
    <location>
        <begin position="65"/>
        <end position="67"/>
    </location>
</feature>
<feature type="strand" evidence="8">
    <location>
        <begin position="68"/>
        <end position="70"/>
    </location>
</feature>
<feature type="helix" evidence="8">
    <location>
        <begin position="71"/>
        <end position="73"/>
    </location>
</feature>
<evidence type="ECO:0000256" key="1">
    <source>
        <dbReference type="SAM" id="MobiDB-lite"/>
    </source>
</evidence>
<evidence type="ECO:0000269" key="2">
    <source>
    </source>
</evidence>
<evidence type="ECO:0000303" key="3">
    <source>
    </source>
</evidence>
<evidence type="ECO:0000305" key="4"/>
<evidence type="ECO:0000312" key="5">
    <source>
        <dbReference type="EMBL" id="AFR94101.1"/>
    </source>
</evidence>
<evidence type="ECO:0000312" key="6">
    <source>
        <dbReference type="Proteomes" id="UP000010091"/>
    </source>
</evidence>
<evidence type="ECO:0007744" key="7">
    <source>
        <dbReference type="PDB" id="4P5N"/>
    </source>
</evidence>
<evidence type="ECO:0007829" key="8">
    <source>
        <dbReference type="PDB" id="4P5N"/>
    </source>
</evidence>
<organism evidence="6">
    <name type="scientific">Cryptococcus neoformans var. grubii serotype A (strain H99 / ATCC 208821 / CBS 10515 / FGSC 9487)</name>
    <name type="common">Filobasidiella neoformans var. grubii</name>
    <dbReference type="NCBI Taxonomy" id="235443"/>
    <lineage>
        <taxon>Eukaryota</taxon>
        <taxon>Fungi</taxon>
        <taxon>Dikarya</taxon>
        <taxon>Basidiomycota</taxon>
        <taxon>Agaricomycotina</taxon>
        <taxon>Tremellomycetes</taxon>
        <taxon>Tremellales</taxon>
        <taxon>Cryptococcaceae</taxon>
        <taxon>Cryptococcus</taxon>
        <taxon>Cryptococcus neoformans species complex</taxon>
    </lineage>
</organism>
<keyword id="KW-0002">3D-structure</keyword>
<reference evidence="6" key="1">
    <citation type="journal article" date="2014" name="PLoS Genet.">
        <title>Analysis of the genome and transcriptome of Cryptococcus neoformans var. grubii reveals complex RNA expression and microevolution leading to virulence attenuation.</title>
        <authorList>
            <person name="Janbon G."/>
            <person name="Ormerod K.L."/>
            <person name="Paulet D."/>
            <person name="Byrnes E.J. III"/>
            <person name="Yadav V."/>
            <person name="Chatterjee G."/>
            <person name="Mullapudi N."/>
            <person name="Hon C.-C."/>
            <person name="Billmyre R.B."/>
            <person name="Brunel F."/>
            <person name="Bahn Y.-S."/>
            <person name="Chen W."/>
            <person name="Chen Y."/>
            <person name="Chow E.W.L."/>
            <person name="Coppee J.-Y."/>
            <person name="Floyd-Averette A."/>
            <person name="Gaillardin C."/>
            <person name="Gerik K.J."/>
            <person name="Goldberg J."/>
            <person name="Gonzalez-Hilarion S."/>
            <person name="Gujja S."/>
            <person name="Hamlin J.L."/>
            <person name="Hsueh Y.-P."/>
            <person name="Ianiri G."/>
            <person name="Jones S."/>
            <person name="Kodira C.D."/>
            <person name="Kozubowski L."/>
            <person name="Lam W."/>
            <person name="Marra M."/>
            <person name="Mesner L.D."/>
            <person name="Mieczkowski P.A."/>
            <person name="Moyrand F."/>
            <person name="Nielsen K."/>
            <person name="Proux C."/>
            <person name="Rossignol T."/>
            <person name="Schein J.E."/>
            <person name="Sun S."/>
            <person name="Wollschlaeger C."/>
            <person name="Wood I.A."/>
            <person name="Zeng Q."/>
            <person name="Neuveglise C."/>
            <person name="Newlon C.S."/>
            <person name="Perfect J.R."/>
            <person name="Lodge J.K."/>
            <person name="Idnurm A."/>
            <person name="Stajich J.E."/>
            <person name="Kronstad J.W."/>
            <person name="Sanyal K."/>
            <person name="Heitman J."/>
            <person name="Fraser J.A."/>
            <person name="Cuomo C.A."/>
            <person name="Dietrich F.S."/>
        </authorList>
    </citation>
    <scope>NUCLEOTIDE SEQUENCE [LARGE SCALE GENOMIC DNA]</scope>
    <source>
        <strain>H99 / ATCC 208821 / CBS 10515 / FGSC 9487</strain>
    </source>
</reference>
<reference evidence="7" key="2">
    <citation type="journal article" date="2016" name="PLoS Pathog.">
        <title>A Small Protein Associated with Fungal Energy Metabolism Affects the Virulence of Cryptococcus neoformans in Mammals.</title>
        <authorList>
            <person name="McClelland E.E."/>
            <person name="Ramagopal U.A."/>
            <person name="Rivera J."/>
            <person name="Cox J."/>
            <person name="Nakouzi A."/>
            <person name="Prabu M.M."/>
            <person name="Almo S.C."/>
            <person name="Casadevall A."/>
        </authorList>
    </citation>
    <scope>X-RAY CRYSTALLOGRAPHY (1.49 ANGSTROMS)</scope>
    <scope>FUNCTION</scope>
    <scope>INDUCTION</scope>
    <scope>DISRUPTION PHENOTYPE</scope>
</reference>
<accession>J9VKY2</accession>
<comment type="function">
    <text evidence="2">May play a role in primary metabolism.</text>
</comment>
<comment type="induction">
    <text evidence="2">Repressed in models of infection.</text>
</comment>
<comment type="disruption phenotype">
    <text evidence="2">Leads to abnormal metabolite levels including decreased levels of 2-ketoglutarate and increased levels of phosphoenolpyruvate (PubMed:27583447). When in the presence of NADPH, increases virulence in a macrophage infection model (PubMed:27583447).</text>
</comment>
<protein>
    <recommendedName>
        <fullName evidence="4">Putative primary metabolism protein HVA1</fullName>
    </recommendedName>
    <alternativeName>
        <fullName evidence="3">Hypervirulence-associated protein 1</fullName>
    </alternativeName>
</protein>